<name>TCAM1_MOUSE</name>
<sequence>MDNPGPSLRGAFGILGALERDRLTHLKHKLGSLCSGSQESKLLHAMVLLALGQDTEARVSLESLKMNTVAQLVAHQWADMETTEGPEEPPDLSWTVARLYHLLAEENLCPASTRDMAYQVALRDFASQGDHQLGQLQNEAWDRCSSDIKGDPSGFQPLHSHQGSLQPPSASPAVTRSQPRPIDTPDWSWGHTLHSTNSTASLASHLEISQSPTLAFLSSHHGTHGPSKLCNTPLDTQEPQLVPEGCQEPEEISWPPSVETSVSLGLPHEISVPEVSPEEASPILPDALAAPDTSVHCPIECTELSTNSRSPLTSTTESVGKQWPITSQRSPQVPVGDDSLQNTTSSSPPAQPPSLQASPKLPPSPLSSASSPSSYPAPPTSTSPVLDHSETSDQKFYNFVVIHARADEQVALRIREKLETLGVPDGATFCEEFQVPGRGELHCLQDAIDHSGFTILLLTASFDCSLSLHQINHALMNSLTQSGRQDCVIPLLPLECSQAQLSPDTTRLLHSIVWLDEHSPIFARKVANTFKTQKLQAQRVRWKKAQEARTLKEQSIQLEAERQNVAAISAAYTAYVHSYRAWQAEMNKLGVAFGKNLSLGTPTPSWPGCPQPIPSHPQGGTPVFPYSPQPPSFPQPPCFPQPPSFPQPPSFPLPPVSSPQSQSFPSASSPAPQTPGPQPLIIHHAQMVQLGVNNHMWGHTGAQSSDDKTECSENPCMGPLTDQGEPLLETPE</sequence>
<organism>
    <name type="scientific">Mus musculus</name>
    <name type="common">Mouse</name>
    <dbReference type="NCBI Taxonomy" id="10090"/>
    <lineage>
        <taxon>Eukaryota</taxon>
        <taxon>Metazoa</taxon>
        <taxon>Chordata</taxon>
        <taxon>Craniata</taxon>
        <taxon>Vertebrata</taxon>
        <taxon>Euteleostomi</taxon>
        <taxon>Mammalia</taxon>
        <taxon>Eutheria</taxon>
        <taxon>Euarchontoglires</taxon>
        <taxon>Glires</taxon>
        <taxon>Rodentia</taxon>
        <taxon>Myomorpha</taxon>
        <taxon>Muroidea</taxon>
        <taxon>Muridae</taxon>
        <taxon>Murinae</taxon>
        <taxon>Mus</taxon>
        <taxon>Mus</taxon>
    </lineage>
</organism>
<gene>
    <name type="primary">Ticam1</name>
    <name type="synonym">Trif</name>
</gene>
<reference key="1">
    <citation type="journal article" date="2003" name="Nat. Immunol.">
        <title>TICAM-1, an adapter molecule that participates in Toll-like receptor 3 mediated interferon-beta induction.</title>
        <authorList>
            <person name="Oshiumi H."/>
            <person name="Matsumoto M."/>
            <person name="Funami K."/>
            <person name="Akazawa T."/>
            <person name="Seya T."/>
        </authorList>
    </citation>
    <scope>NUCLEOTIDE SEQUENCE [MRNA]</scope>
</reference>
<reference key="2">
    <citation type="journal article" date="2005" name="Science">
        <title>The transcriptional landscape of the mammalian genome.</title>
        <authorList>
            <person name="Carninci P."/>
            <person name="Kasukawa T."/>
            <person name="Katayama S."/>
            <person name="Gough J."/>
            <person name="Frith M.C."/>
            <person name="Maeda N."/>
            <person name="Oyama R."/>
            <person name="Ravasi T."/>
            <person name="Lenhard B."/>
            <person name="Wells C."/>
            <person name="Kodzius R."/>
            <person name="Shimokawa K."/>
            <person name="Bajic V.B."/>
            <person name="Brenner S.E."/>
            <person name="Batalov S."/>
            <person name="Forrest A.R."/>
            <person name="Zavolan M."/>
            <person name="Davis M.J."/>
            <person name="Wilming L.G."/>
            <person name="Aidinis V."/>
            <person name="Allen J.E."/>
            <person name="Ambesi-Impiombato A."/>
            <person name="Apweiler R."/>
            <person name="Aturaliya R.N."/>
            <person name="Bailey T.L."/>
            <person name="Bansal M."/>
            <person name="Baxter L."/>
            <person name="Beisel K.W."/>
            <person name="Bersano T."/>
            <person name="Bono H."/>
            <person name="Chalk A.M."/>
            <person name="Chiu K.P."/>
            <person name="Choudhary V."/>
            <person name="Christoffels A."/>
            <person name="Clutterbuck D.R."/>
            <person name="Crowe M.L."/>
            <person name="Dalla E."/>
            <person name="Dalrymple B.P."/>
            <person name="de Bono B."/>
            <person name="Della Gatta G."/>
            <person name="di Bernardo D."/>
            <person name="Down T."/>
            <person name="Engstrom P."/>
            <person name="Fagiolini M."/>
            <person name="Faulkner G."/>
            <person name="Fletcher C.F."/>
            <person name="Fukushima T."/>
            <person name="Furuno M."/>
            <person name="Futaki S."/>
            <person name="Gariboldi M."/>
            <person name="Georgii-Hemming P."/>
            <person name="Gingeras T.R."/>
            <person name="Gojobori T."/>
            <person name="Green R.E."/>
            <person name="Gustincich S."/>
            <person name="Harbers M."/>
            <person name="Hayashi Y."/>
            <person name="Hensch T.K."/>
            <person name="Hirokawa N."/>
            <person name="Hill D."/>
            <person name="Huminiecki L."/>
            <person name="Iacono M."/>
            <person name="Ikeo K."/>
            <person name="Iwama A."/>
            <person name="Ishikawa T."/>
            <person name="Jakt M."/>
            <person name="Kanapin A."/>
            <person name="Katoh M."/>
            <person name="Kawasawa Y."/>
            <person name="Kelso J."/>
            <person name="Kitamura H."/>
            <person name="Kitano H."/>
            <person name="Kollias G."/>
            <person name="Krishnan S.P."/>
            <person name="Kruger A."/>
            <person name="Kummerfeld S.K."/>
            <person name="Kurochkin I.V."/>
            <person name="Lareau L.F."/>
            <person name="Lazarevic D."/>
            <person name="Lipovich L."/>
            <person name="Liu J."/>
            <person name="Liuni S."/>
            <person name="McWilliam S."/>
            <person name="Madan Babu M."/>
            <person name="Madera M."/>
            <person name="Marchionni L."/>
            <person name="Matsuda H."/>
            <person name="Matsuzawa S."/>
            <person name="Miki H."/>
            <person name="Mignone F."/>
            <person name="Miyake S."/>
            <person name="Morris K."/>
            <person name="Mottagui-Tabar S."/>
            <person name="Mulder N."/>
            <person name="Nakano N."/>
            <person name="Nakauchi H."/>
            <person name="Ng P."/>
            <person name="Nilsson R."/>
            <person name="Nishiguchi S."/>
            <person name="Nishikawa S."/>
            <person name="Nori F."/>
            <person name="Ohara O."/>
            <person name="Okazaki Y."/>
            <person name="Orlando V."/>
            <person name="Pang K.C."/>
            <person name="Pavan W.J."/>
            <person name="Pavesi G."/>
            <person name="Pesole G."/>
            <person name="Petrovsky N."/>
            <person name="Piazza S."/>
            <person name="Reed J."/>
            <person name="Reid J.F."/>
            <person name="Ring B.Z."/>
            <person name="Ringwald M."/>
            <person name="Rost B."/>
            <person name="Ruan Y."/>
            <person name="Salzberg S.L."/>
            <person name="Sandelin A."/>
            <person name="Schneider C."/>
            <person name="Schoenbach C."/>
            <person name="Sekiguchi K."/>
            <person name="Semple C.A."/>
            <person name="Seno S."/>
            <person name="Sessa L."/>
            <person name="Sheng Y."/>
            <person name="Shibata Y."/>
            <person name="Shimada H."/>
            <person name="Shimada K."/>
            <person name="Silva D."/>
            <person name="Sinclair B."/>
            <person name="Sperling S."/>
            <person name="Stupka E."/>
            <person name="Sugiura K."/>
            <person name="Sultana R."/>
            <person name="Takenaka Y."/>
            <person name="Taki K."/>
            <person name="Tammoja K."/>
            <person name="Tan S.L."/>
            <person name="Tang S."/>
            <person name="Taylor M.S."/>
            <person name="Tegner J."/>
            <person name="Teichmann S.A."/>
            <person name="Ueda H.R."/>
            <person name="van Nimwegen E."/>
            <person name="Verardo R."/>
            <person name="Wei C.L."/>
            <person name="Yagi K."/>
            <person name="Yamanishi H."/>
            <person name="Zabarovsky E."/>
            <person name="Zhu S."/>
            <person name="Zimmer A."/>
            <person name="Hide W."/>
            <person name="Bult C."/>
            <person name="Grimmond S.M."/>
            <person name="Teasdale R.D."/>
            <person name="Liu E.T."/>
            <person name="Brusic V."/>
            <person name="Quackenbush J."/>
            <person name="Wahlestedt C."/>
            <person name="Mattick J.S."/>
            <person name="Hume D.A."/>
            <person name="Kai C."/>
            <person name="Sasaki D."/>
            <person name="Tomaru Y."/>
            <person name="Fukuda S."/>
            <person name="Kanamori-Katayama M."/>
            <person name="Suzuki M."/>
            <person name="Aoki J."/>
            <person name="Arakawa T."/>
            <person name="Iida J."/>
            <person name="Imamura K."/>
            <person name="Itoh M."/>
            <person name="Kato T."/>
            <person name="Kawaji H."/>
            <person name="Kawagashira N."/>
            <person name="Kawashima T."/>
            <person name="Kojima M."/>
            <person name="Kondo S."/>
            <person name="Konno H."/>
            <person name="Nakano K."/>
            <person name="Ninomiya N."/>
            <person name="Nishio T."/>
            <person name="Okada M."/>
            <person name="Plessy C."/>
            <person name="Shibata K."/>
            <person name="Shiraki T."/>
            <person name="Suzuki S."/>
            <person name="Tagami M."/>
            <person name="Waki K."/>
            <person name="Watahiki A."/>
            <person name="Okamura-Oho Y."/>
            <person name="Suzuki H."/>
            <person name="Kawai J."/>
            <person name="Hayashizaki Y."/>
        </authorList>
    </citation>
    <scope>NUCLEOTIDE SEQUENCE [LARGE SCALE MRNA]</scope>
    <source>
        <strain>C57BL/6J</strain>
        <strain>NOD</strain>
        <tissue>Bone marrow</tissue>
        <tissue>Spleen</tissue>
    </source>
</reference>
<reference key="3">
    <citation type="journal article" date="2004" name="Genome Res.">
        <title>The status, quality, and expansion of the NIH full-length cDNA project: the Mammalian Gene Collection (MGC).</title>
        <authorList>
            <consortium name="The MGC Project Team"/>
        </authorList>
    </citation>
    <scope>NUCLEOTIDE SEQUENCE [LARGE SCALE MRNA]</scope>
    <source>
        <strain>C57BL/6J</strain>
        <strain>FVB/N</strain>
        <strain>FVB/N-3</strain>
        <tissue>Eye</tissue>
        <tissue>Jaw</tissue>
        <tissue>Limb</tissue>
        <tissue>Mammary tumor</tissue>
        <tissue>Salivary gland</tissue>
    </source>
</reference>
<reference key="4">
    <citation type="journal article" date="2003" name="Science">
        <title>Role of adaptor TRIF in the MyD88-independent toll-like receptor signaling pathway.</title>
        <authorList>
            <person name="Yamamoto M."/>
            <person name="Sato S."/>
            <person name="Hemmi H."/>
            <person name="Hoshino K."/>
            <person name="Kaisho T."/>
            <person name="Sanjo H."/>
            <person name="Takeuchi O."/>
            <person name="Sugiyama M."/>
            <person name="Okabe M."/>
            <person name="Takeda K."/>
            <person name="Akira S."/>
        </authorList>
    </citation>
    <scope>FUNCTION</scope>
    <scope>DISRUPTION PHENOTYPE</scope>
</reference>
<reference key="5">
    <citation type="journal article" date="2005" name="J. Immunol.">
        <title>TLR4 and Toll-IL-1 receptor domain-containing adapter-inducing IFN-beta, but not MyD88, regulate Escherichia coli-induced dendritic cell maturation and apoptosis in vivo.</title>
        <authorList>
            <person name="De Trez C."/>
            <person name="Pajak B."/>
            <person name="Brait M."/>
            <person name="Glaichenhaus N."/>
            <person name="Urbain J."/>
            <person name="Moser M."/>
            <person name="Lauvau G."/>
            <person name="Muraille E."/>
        </authorList>
    </citation>
    <scope>FUNCTION</scope>
</reference>
<reference key="6">
    <citation type="journal article" date="2006" name="Nature">
        <title>Critical role of TRAF3 in the Toll-like receptor-dependent and -independent antiviral response.</title>
        <authorList>
            <person name="Oganesyan G."/>
            <person name="Saha S.K."/>
            <person name="Guo B."/>
            <person name="He J.Q."/>
            <person name="Shahangian A."/>
            <person name="Zarnegar B."/>
            <person name="Perry A."/>
            <person name="Cheng G."/>
        </authorList>
    </citation>
    <scope>INTERACTION WITH TRAF3</scope>
</reference>
<reference key="7">
    <citation type="journal article" date="2007" name="Nat. Rev. Immunol.">
        <title>The family of five: TIR-domain-containing adaptors in Toll-like receptor signalling.</title>
        <authorList>
            <person name="O'Neill L.A."/>
            <person name="Bowie A.G."/>
        </authorList>
    </citation>
    <scope>REVIEW</scope>
</reference>
<reference key="8">
    <citation type="journal article" date="2008" name="J. Biol. Chem.">
        <title>FLN29 deficiency reveals its negative regulatory role in the Toll-like receptor (TLR) and retinoic acid-inducible gene I (RIG-I)-like helicase signaling pathway.</title>
        <authorList>
            <person name="Sanada T."/>
            <person name="Takaesu G."/>
            <person name="Mashima R."/>
            <person name="Yoshida R."/>
            <person name="Kobayashi T."/>
            <person name="Yoshimura A."/>
        </authorList>
    </citation>
    <scope>INTERACTION WITH TRAFD1</scope>
</reference>
<reference key="9">
    <citation type="journal article" date="2011" name="Immunity">
        <title>DDX1, DDX21, and DHX36 helicases form a complex with the adaptor molecule TRIF to sense dsRNA in dendritic cells.</title>
        <authorList>
            <person name="Zhang Z."/>
            <person name="Kim T."/>
            <person name="Bao M."/>
            <person name="Facchinetti V."/>
            <person name="Jung S.Y."/>
            <person name="Ghaffari A.A."/>
            <person name="Qin J."/>
            <person name="Cheng G."/>
            <person name="Liu Y.J."/>
        </authorList>
    </citation>
    <scope>FUNCTION</scope>
    <scope>INTERACTION WITH DDX21 AND DHX36</scope>
    <scope>IDENTIFICATION IN A COMPLEX WITH DDX1; DDX21 AND DHX36</scope>
    <scope>IDENTIFICATION BY MASS SPECTROMETRY</scope>
    <scope>SUBCELLULAR LOCATION</scope>
</reference>
<reference key="10">
    <citation type="journal article" date="2015" name="EMBO Rep.">
        <title>WDFY1 mediates TLR3/4 signaling by recruiting TRIF.</title>
        <authorList>
            <person name="Hu Y.H."/>
            <person name="Zhang Y."/>
            <person name="Jiang L.Q."/>
            <person name="Wang S."/>
            <person name="Lei C.Q."/>
            <person name="Sun M.S."/>
            <person name="Shu H.B."/>
            <person name="Liu Y."/>
        </authorList>
    </citation>
    <scope>INTERACTION WITH WDFY1; TLR3 AND TLR4</scope>
</reference>
<reference key="11">
    <citation type="journal article" date="2015" name="J. Immunol.">
        <title>TRIM38 negatively regulates TLR3/4-mediated innate immune and inflammatory responses by two sequential and distinct mechanisms.</title>
        <authorList>
            <person name="Hu M.M."/>
            <person name="Xie X.Q."/>
            <person name="Yang Q."/>
            <person name="Liao C.Y."/>
            <person name="Ye W."/>
            <person name="Lin H."/>
            <person name="Shu H.B."/>
        </authorList>
    </citation>
    <scope>UBIQUITINATION AT LYS-228</scope>
    <scope>MUTAGENESIS OF LYS-228 AND LYS-321</scope>
</reference>
<proteinExistence type="evidence at protein level"/>
<accession>Q80UF7</accession>
<accession>Q3UDB7</accession>
<accession>Q3UP66</accession>
<accession>Q6P6J2</accession>
<accession>Q8CIB7</accession>
<accession>Q8JZV0</accession>
<dbReference type="EMBL" id="AB091053">
    <property type="protein sequence ID" value="BAC55581.1"/>
    <property type="molecule type" value="mRNA"/>
</dbReference>
<dbReference type="EMBL" id="AK143766">
    <property type="protein sequence ID" value="BAE25531.1"/>
    <property type="molecule type" value="mRNA"/>
</dbReference>
<dbReference type="EMBL" id="AK150150">
    <property type="protein sequence ID" value="BAE29344.1"/>
    <property type="molecule type" value="mRNA"/>
</dbReference>
<dbReference type="EMBL" id="AK155245">
    <property type="protein sequence ID" value="BAE33144.1"/>
    <property type="molecule type" value="mRNA"/>
</dbReference>
<dbReference type="EMBL" id="BC033406">
    <property type="protein sequence ID" value="AAH33406.1"/>
    <property type="status" value="ALT_SEQ"/>
    <property type="molecule type" value="mRNA"/>
</dbReference>
<dbReference type="EMBL" id="BC037048">
    <property type="protein sequence ID" value="AAH37048.1"/>
    <property type="status" value="ALT_INIT"/>
    <property type="molecule type" value="mRNA"/>
</dbReference>
<dbReference type="EMBL" id="BC062191">
    <property type="protein sequence ID" value="AAH62191.1"/>
    <property type="status" value="ALT_FRAME"/>
    <property type="molecule type" value="mRNA"/>
</dbReference>
<dbReference type="EMBL" id="BC094338">
    <property type="protein sequence ID" value="AAH94338.1"/>
    <property type="molecule type" value="mRNA"/>
</dbReference>
<dbReference type="CCDS" id="CCDS28900.1"/>
<dbReference type="RefSeq" id="NP_778154.1">
    <property type="nucleotide sequence ID" value="NM_174989.5"/>
</dbReference>
<dbReference type="SMR" id="Q80UF7"/>
<dbReference type="BioGRID" id="223122">
    <property type="interactions" value="10"/>
</dbReference>
<dbReference type="CORUM" id="Q80UF7"/>
<dbReference type="DIP" id="DIP-60033N"/>
<dbReference type="FunCoup" id="Q80UF7">
    <property type="interactions" value="482"/>
</dbReference>
<dbReference type="IntAct" id="Q80UF7">
    <property type="interactions" value="6"/>
</dbReference>
<dbReference type="STRING" id="10090.ENSMUSP00000055104"/>
<dbReference type="GlyGen" id="Q80UF7">
    <property type="glycosylation" value="2 sites, 1 O-linked glycan (1 site)"/>
</dbReference>
<dbReference type="iPTMnet" id="Q80UF7"/>
<dbReference type="PhosphoSitePlus" id="Q80UF7"/>
<dbReference type="SwissPalm" id="Q80UF7"/>
<dbReference type="PaxDb" id="10090-ENSMUSP00000055104"/>
<dbReference type="ProteomicsDB" id="263143"/>
<dbReference type="Pumba" id="Q80UF7"/>
<dbReference type="Antibodypedia" id="11536">
    <property type="antibodies" value="353 antibodies from 42 providers"/>
</dbReference>
<dbReference type="DNASU" id="106759"/>
<dbReference type="Ensembl" id="ENSMUST00000058136.9">
    <property type="protein sequence ID" value="ENSMUSP00000055104.9"/>
    <property type="gene ID" value="ENSMUSG00000047123.9"/>
</dbReference>
<dbReference type="GeneID" id="106759"/>
<dbReference type="KEGG" id="mmu:106759"/>
<dbReference type="UCSC" id="uc008dbm.2">
    <property type="organism name" value="mouse"/>
</dbReference>
<dbReference type="AGR" id="MGI:2147032"/>
<dbReference type="CTD" id="148022"/>
<dbReference type="MGI" id="MGI:2147032">
    <property type="gene designation" value="Ticam1"/>
</dbReference>
<dbReference type="VEuPathDB" id="HostDB:ENSMUSG00000047123"/>
<dbReference type="eggNOG" id="ENOG502RXF3">
    <property type="taxonomic scope" value="Eukaryota"/>
</dbReference>
<dbReference type="GeneTree" id="ENSGT00940000162411"/>
<dbReference type="HOGENOM" id="CLU_022539_0_0_1"/>
<dbReference type="InParanoid" id="Q80UF7"/>
<dbReference type="OMA" id="TRHGWQD"/>
<dbReference type="OrthoDB" id="9906976at2759"/>
<dbReference type="PhylomeDB" id="Q80UF7"/>
<dbReference type="TreeFam" id="TF336953"/>
<dbReference type="Reactome" id="R-MMU-140534">
    <property type="pathway name" value="Caspase activation via Death Receptors in the presence of ligand"/>
</dbReference>
<dbReference type="Reactome" id="R-MMU-166166">
    <property type="pathway name" value="MyD88-independent TLR4 cascade"/>
</dbReference>
<dbReference type="Reactome" id="R-MMU-2562578">
    <property type="pathway name" value="TRIF-mediated programmed cell death"/>
</dbReference>
<dbReference type="Reactome" id="R-MMU-936964">
    <property type="pathway name" value="Activation of IRF3, IRF7 mediated by TBK1, IKKEpsilon (IKBKE)"/>
</dbReference>
<dbReference type="Reactome" id="R-MMU-937041">
    <property type="pathway name" value="IKK complex recruitment mediated by RIP1"/>
</dbReference>
<dbReference type="Reactome" id="R-MMU-937072">
    <property type="pathway name" value="TRAF6-mediated induction of TAK1 complex within TLR4 complex"/>
</dbReference>
<dbReference type="Reactome" id="R-MMU-975163">
    <property type="pathway name" value="IRAK2 mediated activation of TAK1 complex upon TLR7/8 or 9 stimulation"/>
</dbReference>
<dbReference type="Reactome" id="R-MMU-9824878">
    <property type="pathway name" value="Regulation of TBK1, IKKEpsilon (IKBKE)-mediated activation of IRF3, IRF7"/>
</dbReference>
<dbReference type="BioGRID-ORCS" id="106759">
    <property type="hits" value="5 hits in 79 CRISPR screens"/>
</dbReference>
<dbReference type="PRO" id="PR:Q80UF7"/>
<dbReference type="Proteomes" id="UP000000589">
    <property type="component" value="Chromosome 17"/>
</dbReference>
<dbReference type="RNAct" id="Q80UF7">
    <property type="molecule type" value="protein"/>
</dbReference>
<dbReference type="Bgee" id="ENSMUSG00000047123">
    <property type="expression patterns" value="Expressed in ureteric bud trunk and 140 other cell types or tissues"/>
</dbReference>
<dbReference type="GO" id="GO:0005776">
    <property type="term" value="C:autophagosome"/>
    <property type="evidence" value="ECO:0007669"/>
    <property type="project" value="UniProtKB-SubCell"/>
</dbReference>
<dbReference type="GO" id="GO:0005829">
    <property type="term" value="C:cytosol"/>
    <property type="evidence" value="ECO:0000314"/>
    <property type="project" value="UniProtKB"/>
</dbReference>
<dbReference type="GO" id="GO:0005769">
    <property type="term" value="C:early endosome"/>
    <property type="evidence" value="ECO:0007669"/>
    <property type="project" value="Ensembl"/>
</dbReference>
<dbReference type="GO" id="GO:0010008">
    <property type="term" value="C:endosome membrane"/>
    <property type="evidence" value="ECO:0007669"/>
    <property type="project" value="Ensembl"/>
</dbReference>
<dbReference type="GO" id="GO:0005739">
    <property type="term" value="C:mitochondrion"/>
    <property type="evidence" value="ECO:0000314"/>
    <property type="project" value="UniProtKB"/>
</dbReference>
<dbReference type="GO" id="GO:0097342">
    <property type="term" value="C:ripoptosome"/>
    <property type="evidence" value="ECO:0007669"/>
    <property type="project" value="Ensembl"/>
</dbReference>
<dbReference type="GO" id="GO:0019901">
    <property type="term" value="F:protein kinase binding"/>
    <property type="evidence" value="ECO:0007669"/>
    <property type="project" value="Ensembl"/>
</dbReference>
<dbReference type="GO" id="GO:0035591">
    <property type="term" value="F:signaling adaptor activity"/>
    <property type="evidence" value="ECO:0000314"/>
    <property type="project" value="MGI"/>
</dbReference>
<dbReference type="GO" id="GO:0097190">
    <property type="term" value="P:apoptotic signaling pathway"/>
    <property type="evidence" value="ECO:0000315"/>
    <property type="project" value="MGI"/>
</dbReference>
<dbReference type="GO" id="GO:0042113">
    <property type="term" value="P:B cell activation"/>
    <property type="evidence" value="ECO:0000315"/>
    <property type="project" value="MGI"/>
</dbReference>
<dbReference type="GO" id="GO:0042100">
    <property type="term" value="P:B cell proliferation"/>
    <property type="evidence" value="ECO:0000315"/>
    <property type="project" value="MGI"/>
</dbReference>
<dbReference type="GO" id="GO:0071222">
    <property type="term" value="P:cellular response to lipopolysaccharide"/>
    <property type="evidence" value="ECO:0000315"/>
    <property type="project" value="ParkinsonsUK-UCL"/>
</dbReference>
<dbReference type="GO" id="GO:0140052">
    <property type="term" value="P:cellular response to oxidised low-density lipoprotein particle stimulus"/>
    <property type="evidence" value="ECO:0000315"/>
    <property type="project" value="ARUK-UCL"/>
</dbReference>
<dbReference type="GO" id="GO:0051607">
    <property type="term" value="P:defense response to virus"/>
    <property type="evidence" value="ECO:0000315"/>
    <property type="project" value="MGI"/>
</dbReference>
<dbReference type="GO" id="GO:0006954">
    <property type="term" value="P:inflammatory response"/>
    <property type="evidence" value="ECO:0007669"/>
    <property type="project" value="UniProtKB-KW"/>
</dbReference>
<dbReference type="GO" id="GO:0045087">
    <property type="term" value="P:innate immune response"/>
    <property type="evidence" value="ECO:0007669"/>
    <property type="project" value="UniProtKB-KW"/>
</dbReference>
<dbReference type="GO" id="GO:0031663">
    <property type="term" value="P:lipopolysaccharide-mediated signaling pathway"/>
    <property type="evidence" value="ECO:0000315"/>
    <property type="project" value="MGI"/>
</dbReference>
<dbReference type="GO" id="GO:0002281">
    <property type="term" value="P:macrophage activation involved in immune response"/>
    <property type="evidence" value="ECO:0000315"/>
    <property type="project" value="MGI"/>
</dbReference>
<dbReference type="GO" id="GO:0002756">
    <property type="term" value="P:MyD88-independent toll-like receptor signaling pathway"/>
    <property type="evidence" value="ECO:0000315"/>
    <property type="project" value="MGI"/>
</dbReference>
<dbReference type="GO" id="GO:0006809">
    <property type="term" value="P:nitric oxide biosynthetic process"/>
    <property type="evidence" value="ECO:0000315"/>
    <property type="project" value="MGI"/>
</dbReference>
<dbReference type="GO" id="GO:0010508">
    <property type="term" value="P:positive regulation of autophagy"/>
    <property type="evidence" value="ECO:0000315"/>
    <property type="project" value="ParkinsonsUK-UCL"/>
</dbReference>
<dbReference type="GO" id="GO:0050871">
    <property type="term" value="P:positive regulation of B cell activation"/>
    <property type="evidence" value="ECO:0000315"/>
    <property type="project" value="MGI"/>
</dbReference>
<dbReference type="GO" id="GO:0030890">
    <property type="term" value="P:positive regulation of B cell proliferation"/>
    <property type="evidence" value="ECO:0000315"/>
    <property type="project" value="MGI"/>
</dbReference>
<dbReference type="GO" id="GO:0043123">
    <property type="term" value="P:positive regulation of canonical NF-kappaB signal transduction"/>
    <property type="evidence" value="ECO:0000315"/>
    <property type="project" value="UniProtKB"/>
</dbReference>
<dbReference type="GO" id="GO:0032722">
    <property type="term" value="P:positive regulation of chemokine production"/>
    <property type="evidence" value="ECO:0000315"/>
    <property type="project" value="MGI"/>
</dbReference>
<dbReference type="GO" id="GO:1900017">
    <property type="term" value="P:positive regulation of cytokine production involved in inflammatory response"/>
    <property type="evidence" value="ECO:0000315"/>
    <property type="project" value="ARUK-UCL"/>
</dbReference>
<dbReference type="GO" id="GO:0010628">
    <property type="term" value="P:positive regulation of gene expression"/>
    <property type="evidence" value="ECO:0000315"/>
    <property type="project" value="ARUK-UCL"/>
</dbReference>
<dbReference type="GO" id="GO:0032728">
    <property type="term" value="P:positive regulation of interferon-beta production"/>
    <property type="evidence" value="ECO:0000315"/>
    <property type="project" value="MGI"/>
</dbReference>
<dbReference type="GO" id="GO:0032755">
    <property type="term" value="P:positive regulation of interleukin-6 production"/>
    <property type="evidence" value="ECO:0000315"/>
    <property type="project" value="MGI"/>
</dbReference>
<dbReference type="GO" id="GO:0060907">
    <property type="term" value="P:positive regulation of macrophage cytokine production"/>
    <property type="evidence" value="ECO:0000314"/>
    <property type="project" value="MGI"/>
</dbReference>
<dbReference type="GO" id="GO:0002735">
    <property type="term" value="P:positive regulation of myeloid dendritic cell cytokine production"/>
    <property type="evidence" value="ECO:0000315"/>
    <property type="project" value="UniProtKB"/>
</dbReference>
<dbReference type="GO" id="GO:0032816">
    <property type="term" value="P:positive regulation of natural killer cell activation"/>
    <property type="evidence" value="ECO:0000315"/>
    <property type="project" value="MGI"/>
</dbReference>
<dbReference type="GO" id="GO:0045429">
    <property type="term" value="P:positive regulation of nitric oxide biosynthetic process"/>
    <property type="evidence" value="ECO:0000315"/>
    <property type="project" value="MGI"/>
</dbReference>
<dbReference type="GO" id="GO:0031398">
    <property type="term" value="P:positive regulation of protein ubiquitination"/>
    <property type="evidence" value="ECO:0000314"/>
    <property type="project" value="MGI"/>
</dbReference>
<dbReference type="GO" id="GO:0032760">
    <property type="term" value="P:positive regulation of tumor necrosis factor production"/>
    <property type="evidence" value="ECO:0000314"/>
    <property type="project" value="MGI"/>
</dbReference>
<dbReference type="GO" id="GO:0032481">
    <property type="term" value="P:positive regulation of type I interferon production"/>
    <property type="evidence" value="ECO:0000315"/>
    <property type="project" value="MGI"/>
</dbReference>
<dbReference type="GO" id="GO:0043254">
    <property type="term" value="P:regulation of protein-containing complex assembly"/>
    <property type="evidence" value="ECO:0000315"/>
    <property type="project" value="MGI"/>
</dbReference>
<dbReference type="GO" id="GO:0043330">
    <property type="term" value="P:response to exogenous dsRNA"/>
    <property type="evidence" value="ECO:0000314"/>
    <property type="project" value="MGI"/>
</dbReference>
<dbReference type="GO" id="GO:0032496">
    <property type="term" value="P:response to lipopolysaccharide"/>
    <property type="evidence" value="ECO:0000315"/>
    <property type="project" value="MGI"/>
</dbReference>
<dbReference type="GO" id="GO:0034138">
    <property type="term" value="P:toll-like receptor 3 signaling pathway"/>
    <property type="evidence" value="ECO:0007669"/>
    <property type="project" value="Ensembl"/>
</dbReference>
<dbReference type="GO" id="GO:0034142">
    <property type="term" value="P:toll-like receptor 4 signaling pathway"/>
    <property type="evidence" value="ECO:0007669"/>
    <property type="project" value="Ensembl"/>
</dbReference>
<dbReference type="GO" id="GO:0035666">
    <property type="term" value="P:TRIF-dependent toll-like receptor signaling pathway"/>
    <property type="evidence" value="ECO:0000315"/>
    <property type="project" value="ParkinsonsUK-UCL"/>
</dbReference>
<dbReference type="FunFam" id="1.25.40.780:FF:000001">
    <property type="entry name" value="TIR domain-containing adapter molecule 1"/>
    <property type="match status" value="1"/>
</dbReference>
<dbReference type="FunFam" id="3.40.50.10140:FF:000024">
    <property type="entry name" value="TIR domain-containing adapter molecule 1"/>
    <property type="match status" value="1"/>
</dbReference>
<dbReference type="Gene3D" id="1.25.40.780">
    <property type="match status" value="1"/>
</dbReference>
<dbReference type="Gene3D" id="3.40.50.10140">
    <property type="entry name" value="Toll/interleukin-1 receptor homology (TIR) domain"/>
    <property type="match status" value="1"/>
</dbReference>
<dbReference type="InterPro" id="IPR025735">
    <property type="entry name" value="RHIM"/>
</dbReference>
<dbReference type="InterPro" id="IPR046946">
    <property type="entry name" value="TCAM1/2"/>
</dbReference>
<dbReference type="InterPro" id="IPR017278">
    <property type="entry name" value="TICAM1"/>
</dbReference>
<dbReference type="InterPro" id="IPR000157">
    <property type="entry name" value="TIR_dom"/>
</dbReference>
<dbReference type="InterPro" id="IPR035897">
    <property type="entry name" value="Toll_tir_struct_dom_sf"/>
</dbReference>
<dbReference type="InterPro" id="IPR040886">
    <property type="entry name" value="TRIF_N"/>
</dbReference>
<dbReference type="PANTHER" id="PTHR47230">
    <property type="entry name" value="TIR DOMAIN-CONTAINING ADAPTER MOLECULE 1"/>
    <property type="match status" value="1"/>
</dbReference>
<dbReference type="PANTHER" id="PTHR47230:SF1">
    <property type="entry name" value="TIR DOMAIN-CONTAINING ADAPTER MOLECULE 1"/>
    <property type="match status" value="1"/>
</dbReference>
<dbReference type="Pfam" id="PF12721">
    <property type="entry name" value="RHIM"/>
    <property type="match status" value="1"/>
</dbReference>
<dbReference type="Pfam" id="PF17798">
    <property type="entry name" value="TRIF-NTD"/>
    <property type="match status" value="1"/>
</dbReference>
<dbReference type="PIRSF" id="PIRSF037744">
    <property type="entry name" value="TIR_Ticam"/>
    <property type="match status" value="1"/>
</dbReference>
<dbReference type="SUPFAM" id="SSF52200">
    <property type="entry name" value="Toll/Interleukin receptor TIR domain"/>
    <property type="match status" value="1"/>
</dbReference>
<dbReference type="PROSITE" id="PS50104">
    <property type="entry name" value="TIR"/>
    <property type="match status" value="1"/>
</dbReference>
<comment type="function">
    <text evidence="1 4 5 8">Involved in innate immunity against invading pathogens. Adapter used by TLR3, TLR4 (through TICAM2) and TLR5 to mediate NF-kappa-B and interferon-regulatory factor (IRF) activation, and to induce apoptosis (PubMed:12855817, PubMed:16002681, PubMed:21703541). Ligand binding to these receptors results in TRIF recruitment through its TIR domain (PubMed:12855817, PubMed:16002681, PubMed:21703541). Distinct protein-interaction motifs allow recruitment of the effector proteins TBK1, TRAF6 and RIPK1, which in turn, lead to the activation of transcription factors IRF3 and IRF7, NF-kappa-B and FADD respectively (PubMed:12855817, PubMed:16002681, PubMed:21703541). Phosphorylation by TBK1 on the pLxIS motif leads to recruitment and subsequent activation of the transcription factor IRF3 to induce expression of type I interferon and exert a potent immunity against invading pathogens (By similarity). Component of a multi-helicase-TICAM1 complex that acts as a cytoplasmic sensor of viral double-stranded RNA (dsRNA) and plays a role in the activation of a cascade of antiviral responses including the induction of pro-inflammatory cytokines (PubMed:21703541).</text>
</comment>
<comment type="subunit">
    <text evidence="1 6 7 8 9">Homodimer (By similarity). Found in a multi-helicase-TICAM1 complex at least composed of DHX36, DDX1, DDX21 and TICAM1; this complex exists in resting cells with or without poly(I:C) RNA ligand stimulation (PubMed:21703541). Interacts (via TIR domain) with DDX21 (via C-terminus) (PubMed:21703541). Interacts (via TIR domain) with DHX36 (via C-terminus) (PubMed:21703541). Interacts with AZI2 and IRF7 (By similarity). Interacts (when phosphorylated) with IRF3; following activation and phosphorylation on the pLxIS motif by TBK1, recruits IRF3 (By similarity). Interacts with TICAM2 in TLR4 recruitment (By similarity). Interaction with PIAS4 inhibits the TICAM1-induced NF-kappa-B, IRF and IFNB1 activation (By similarity). Interacts with IKBKB and IKBKE (By similarity). Interaction with SARM1 blocks TICAM1-dependent transcription factor activation (By similarity). Interacts with TRAF3. Interacts with TRAFD1. Interacts with UBQLN1 (via UBA domain). Interacts with TBK1, TRAF6 and RIPK1 and these interactions are enhanced in the presence of WDFY1 (By similarity). Interacts (via the TIR domain) with TLR3 in response to poly(I:C) and this interaction is enhanced in the presence of WDFY1 (PubMed:25736436). Interacts with TLR4 in response to poly(I:C) in a WDFY1-dependent manner (PubMed:25736436). Interacts with WDFY1 in response to poly(I:C) (PubMed:25736436). Interacts with TRIM56 (By similarity). Interacts (via the TIR domain) with TLR5 (By similarity). Interacts with TRIM8 (By similarity). Interacts with TAX1BP1 and TRIM32; these interactions target TICAM1 to TAX1BP1-mediated selective autophagic degradation (By similarity). Interacts with DDX50 (By similarity).</text>
</comment>
<comment type="interaction">
    <interactant intactId="EBI-3649271">
        <id>Q80UF7</id>
    </interactant>
    <interactant intactId="EBI-625119">
        <id>P35991</id>
        <label>Btk</label>
    </interactant>
    <organismsDiffer>false</organismsDiffer>
    <experiments>2</experiments>
</comment>
<comment type="interaction">
    <interactant intactId="EBI-3649271">
        <id>Q80UF7</id>
    </interactant>
    <interactant intactId="EBI-3649276">
        <id>Q3TTA7</id>
        <label>Cblb</label>
    </interactant>
    <organismsDiffer>false</organismsDiffer>
    <experiments>2</experiments>
</comment>
<comment type="interaction">
    <interactant intactId="EBI-3649271">
        <id>Q80UF7</id>
    </interactant>
    <interactant intactId="EBI-764193">
        <id>Q9WUN2</id>
        <label>Tbk1</label>
    </interactant>
    <organismsDiffer>false</organismsDiffer>
    <experiments>2</experiments>
</comment>
<comment type="interaction">
    <interactant intactId="EBI-3649271">
        <id>Q80UF7</id>
    </interactant>
    <interactant intactId="EBI-520135">
        <id>Q60803</id>
        <label>Traf3</label>
    </interactant>
    <organismsDiffer>false</organismsDiffer>
    <experiments>2</experiments>
</comment>
<comment type="subcellular location">
    <subcellularLocation>
        <location evidence="8">Cytoplasm</location>
        <location evidence="8">Cytosol</location>
    </subcellularLocation>
    <subcellularLocation>
        <location evidence="1">Cytoplasmic vesicle</location>
        <location evidence="1">Autophagosome</location>
    </subcellularLocation>
    <subcellularLocation>
        <location evidence="8">Mitochondrion</location>
    </subcellularLocation>
    <text evidence="1 8">Colocalizes with UBQLN1 in the autophagosome. Colocalizes in the cytosol with DDX1, DDX21 and DHX36 (PubMed:21703541). Colocalizes in the mitochondria with DDX1 and poly(I:C) RNA ligand (PubMed:21703541). The multi-helicase-TICAM1 complex may translocate to the mitochondria upon poly(I:C) RNA ligand stimulation (PubMed:21703541).</text>
</comment>
<comment type="domain">
    <text evidence="1">The pLxIS motif constitutes an IRF3-binding motif: following phosphorylation by TBK1, the phosphorylated pLxIS motif of TICAM1 recruits IRF3. IRF3 is then phosphorylated and activated by TBK1 to induce type-I interferons and other cytokines.</text>
</comment>
<comment type="domain">
    <text evidence="1">The N-terminal region is essential for activation of the IFNB promoter activity.</text>
</comment>
<comment type="domain">
    <text evidence="1">The N-terminal domain (TRIF-NTD) is globular and consists of two alpha-helical subdomains connected by a 14-residue linker. It shares structural similarity with IFIT family members N-terminal regions.</text>
</comment>
<comment type="PTM">
    <text evidence="1">Phosphorylated by TBK1. Following activation, phosphorylated by TBK1 at Ser-209 in the pLxIS motif. The phosphorylated pLxIS motif constitutes an IRF3-binding motif, leading to recruitment of the transcription factor IRF3 to induce type-I interferons and other cytokines.</text>
</comment>
<comment type="PTM">
    <text evidence="1 10">Polyubiquitinated at Lys-228 by TRIM38 with 'Lys-48'-linked chains, leading to proteasomal degradation (PubMed:26392463). Polyubiquitinated with 'Lys-6'- and 'Lys-33'-linked chains in a TRIM8-dependent manner; ubiquitination disrupts the interaction with TBK1 and subsequent interferon production (By similarity).</text>
</comment>
<comment type="disruption phenotype">
    <text evidence="4">Mice are viable but exhibit abnormalities of the innate immune system.</text>
</comment>
<comment type="sequence caution" evidence="11">
    <conflict type="miscellaneous discrepancy">
        <sequence resource="EMBL-CDS" id="AAH33406"/>
    </conflict>
</comment>
<comment type="sequence caution" evidence="11">
    <conflict type="erroneous initiation">
        <sequence resource="EMBL-CDS" id="AAH37048"/>
    </conflict>
    <text>Extended N-terminus.</text>
</comment>
<comment type="sequence caution" evidence="11">
    <conflict type="frameshift">
        <sequence resource="EMBL-CDS" id="AAH62191"/>
    </conflict>
</comment>
<evidence type="ECO:0000250" key="1">
    <source>
        <dbReference type="UniProtKB" id="Q8IUC6"/>
    </source>
</evidence>
<evidence type="ECO:0000255" key="2">
    <source>
        <dbReference type="PROSITE-ProRule" id="PRU00204"/>
    </source>
</evidence>
<evidence type="ECO:0000256" key="3">
    <source>
        <dbReference type="SAM" id="MobiDB-lite"/>
    </source>
</evidence>
<evidence type="ECO:0000269" key="4">
    <source>
    </source>
</evidence>
<evidence type="ECO:0000269" key="5">
    <source>
    </source>
</evidence>
<evidence type="ECO:0000269" key="6">
    <source>
    </source>
</evidence>
<evidence type="ECO:0000269" key="7">
    <source>
    </source>
</evidence>
<evidence type="ECO:0000269" key="8">
    <source>
    </source>
</evidence>
<evidence type="ECO:0000269" key="9">
    <source>
    </source>
</evidence>
<evidence type="ECO:0000269" key="10">
    <source>
    </source>
</evidence>
<evidence type="ECO:0000305" key="11"/>
<protein>
    <recommendedName>
        <fullName>TIR domain-containing adapter molecule 1</fullName>
        <shortName>TICAM-1</shortName>
    </recommendedName>
    <alternativeName>
        <fullName>Toll-interleukin-1 receptor domain-containing adapter protein inducing interferon beta</fullName>
        <shortName>TIR domain-containing adapter protein inducing IFN-beta</shortName>
    </alternativeName>
</protein>
<feature type="chain" id="PRO_0000317664" description="TIR domain-containing adapter molecule 1">
    <location>
        <begin position="1"/>
        <end position="732"/>
    </location>
</feature>
<feature type="domain" description="TIR" evidence="2">
    <location>
        <begin position="395"/>
        <end position="534"/>
    </location>
</feature>
<feature type="region of interest" description="TRIF-NTD" evidence="1">
    <location>
        <begin position="1"/>
        <end position="153"/>
    </location>
</feature>
<feature type="region of interest" description="Disordered" evidence="3">
    <location>
        <begin position="144"/>
        <end position="191"/>
    </location>
</feature>
<feature type="region of interest" description="Disordered" evidence="3">
    <location>
        <begin position="305"/>
        <end position="389"/>
    </location>
</feature>
<feature type="region of interest" description="Sufficient to induce apoptosis" evidence="1">
    <location>
        <begin position="514"/>
        <end position="713"/>
    </location>
</feature>
<feature type="region of interest" description="Disordered" evidence="3">
    <location>
        <begin position="603"/>
        <end position="679"/>
    </location>
</feature>
<feature type="region of interest" description="Disordered" evidence="3">
    <location>
        <begin position="696"/>
        <end position="732"/>
    </location>
</feature>
<feature type="short sequence motif" description="TRAF6-binding" evidence="1">
    <location>
        <begin position="84"/>
        <end position="91"/>
    </location>
</feature>
<feature type="short sequence motif" description="pLxIS motif" evidence="1">
    <location>
        <begin position="206"/>
        <end position="209"/>
    </location>
</feature>
<feature type="short sequence motif" description="TRAF6-binding" evidence="1">
    <location>
        <begin position="247"/>
        <end position="254"/>
    </location>
</feature>
<feature type="short sequence motif" description="TRAF6-binding" evidence="1">
    <location>
        <begin position="296"/>
        <end position="306"/>
    </location>
</feature>
<feature type="compositionally biased region" description="Polar residues" evidence="3">
    <location>
        <begin position="159"/>
        <end position="178"/>
    </location>
</feature>
<feature type="compositionally biased region" description="Polar residues" evidence="3">
    <location>
        <begin position="305"/>
        <end position="331"/>
    </location>
</feature>
<feature type="compositionally biased region" description="Low complexity" evidence="3">
    <location>
        <begin position="345"/>
        <end position="359"/>
    </location>
</feature>
<feature type="compositionally biased region" description="Pro residues" evidence="3">
    <location>
        <begin position="604"/>
        <end position="615"/>
    </location>
</feature>
<feature type="compositionally biased region" description="Pro residues" evidence="3">
    <location>
        <begin position="625"/>
        <end position="657"/>
    </location>
</feature>
<feature type="compositionally biased region" description="Low complexity" evidence="3">
    <location>
        <begin position="658"/>
        <end position="671"/>
    </location>
</feature>
<feature type="modified residue" description="Phosphoserine" evidence="1">
    <location>
        <position position="209"/>
    </location>
</feature>
<feature type="cross-link" description="Glycyl lysine isopeptide (Lys-Gly) (interchain with G-Cter in ubiquitin)" evidence="10">
    <location>
        <position position="228"/>
    </location>
</feature>
<feature type="mutagenesis site" description="Abolished ubiquitination by TRIM38." evidence="10">
    <original>K</original>
    <variation>R</variation>
    <location>
        <position position="228"/>
    </location>
</feature>
<feature type="mutagenesis site" description="Does not affect ubiquitination by TRIM38." evidence="10">
    <original>K</original>
    <variation>R</variation>
    <location>
        <position position="321"/>
    </location>
</feature>
<feature type="sequence conflict" description="In Ref. 2; BAE29344." evidence="11" ref="2">
    <original>S</original>
    <variation>G</variation>
    <location>
        <position position="227"/>
    </location>
</feature>
<feature type="sequence conflict" description="In Ref. 3; AAH62191." evidence="11" ref="3">
    <location>
        <begin position="351"/>
        <end position="435"/>
    </location>
</feature>
<feature type="sequence conflict" description="In Ref. 2; BAE25531." evidence="11" ref="2">
    <original>V</original>
    <variation>A</variation>
    <location>
        <position position="435"/>
    </location>
</feature>
<feature type="sequence conflict" description="In Ref. 2; BAE29344." evidence="11" ref="2">
    <original>V</original>
    <variation>A</variation>
    <location>
        <position position="513"/>
    </location>
</feature>
<feature type="sequence conflict" description="In Ref. 3; AAH33406." evidence="11" ref="3">
    <location>
        <begin position="628"/>
        <end position="639"/>
    </location>
</feature>
<keyword id="KW-0051">Antiviral defense</keyword>
<keyword id="KW-0053">Apoptosis</keyword>
<keyword id="KW-0963">Cytoplasm</keyword>
<keyword id="KW-0968">Cytoplasmic vesicle</keyword>
<keyword id="KW-0391">Immunity</keyword>
<keyword id="KW-0395">Inflammatory response</keyword>
<keyword id="KW-0399">Innate immunity</keyword>
<keyword id="KW-1017">Isopeptide bond</keyword>
<keyword id="KW-0496">Mitochondrion</keyword>
<keyword id="KW-0597">Phosphoprotein</keyword>
<keyword id="KW-1185">Reference proteome</keyword>
<keyword id="KW-0832">Ubl conjugation</keyword>